<organism>
    <name type="scientific">Shigella boydii serotype 18 (strain CDC 3083-94 / BS512)</name>
    <dbReference type="NCBI Taxonomy" id="344609"/>
    <lineage>
        <taxon>Bacteria</taxon>
        <taxon>Pseudomonadati</taxon>
        <taxon>Pseudomonadota</taxon>
        <taxon>Gammaproteobacteria</taxon>
        <taxon>Enterobacterales</taxon>
        <taxon>Enterobacteriaceae</taxon>
        <taxon>Shigella</taxon>
    </lineage>
</organism>
<evidence type="ECO:0000255" key="1">
    <source>
        <dbReference type="HAMAP-Rule" id="MF_01029"/>
    </source>
</evidence>
<name>YHBQ_SHIB3</name>
<dbReference type="EMBL" id="CP001063">
    <property type="protein sequence ID" value="ACD09992.1"/>
    <property type="molecule type" value="Genomic_DNA"/>
</dbReference>
<dbReference type="RefSeq" id="WP_000189314.1">
    <property type="nucleotide sequence ID" value="NC_010658.1"/>
</dbReference>
<dbReference type="SMR" id="B2U2L2"/>
<dbReference type="STRING" id="344609.SbBS512_E3616"/>
<dbReference type="GeneID" id="93778829"/>
<dbReference type="KEGG" id="sbc:SbBS512_E3616"/>
<dbReference type="HOGENOM" id="CLU_135650_0_1_6"/>
<dbReference type="Proteomes" id="UP000001030">
    <property type="component" value="Chromosome"/>
</dbReference>
<dbReference type="CDD" id="cd10456">
    <property type="entry name" value="GIY-YIG_UPF0213"/>
    <property type="match status" value="1"/>
</dbReference>
<dbReference type="FunFam" id="3.40.1440.10:FF:000002">
    <property type="entry name" value="UPF0213 protein YhbQ"/>
    <property type="match status" value="1"/>
</dbReference>
<dbReference type="Gene3D" id="3.40.1440.10">
    <property type="entry name" value="GIY-YIG endonuclease"/>
    <property type="match status" value="1"/>
</dbReference>
<dbReference type="HAMAP" id="MF_01029">
    <property type="entry name" value="UPF0213"/>
    <property type="match status" value="1"/>
</dbReference>
<dbReference type="InterPro" id="IPR000305">
    <property type="entry name" value="GIY-YIG_endonuc"/>
</dbReference>
<dbReference type="InterPro" id="IPR035901">
    <property type="entry name" value="GIY-YIG_endonuc_sf"/>
</dbReference>
<dbReference type="InterPro" id="IPR050190">
    <property type="entry name" value="UPF0213_domain"/>
</dbReference>
<dbReference type="InterPro" id="IPR022992">
    <property type="entry name" value="UPF0213_GIY-YIG_endonuc"/>
</dbReference>
<dbReference type="PANTHER" id="PTHR34477">
    <property type="entry name" value="UPF0213 PROTEIN YHBQ"/>
    <property type="match status" value="1"/>
</dbReference>
<dbReference type="PANTHER" id="PTHR34477:SF1">
    <property type="entry name" value="UPF0213 PROTEIN YHBQ"/>
    <property type="match status" value="1"/>
</dbReference>
<dbReference type="Pfam" id="PF01541">
    <property type="entry name" value="GIY-YIG"/>
    <property type="match status" value="1"/>
</dbReference>
<dbReference type="SMART" id="SM00465">
    <property type="entry name" value="GIYc"/>
    <property type="match status" value="1"/>
</dbReference>
<dbReference type="SUPFAM" id="SSF82771">
    <property type="entry name" value="GIY-YIG endonuclease"/>
    <property type="match status" value="1"/>
</dbReference>
<dbReference type="PROSITE" id="PS50164">
    <property type="entry name" value="GIY_YIG"/>
    <property type="match status" value="1"/>
</dbReference>
<feature type="chain" id="PRO_1000135751" description="UPF0213 protein YhbQ">
    <location>
        <begin position="1"/>
        <end position="100"/>
    </location>
</feature>
<feature type="domain" description="GIY-YIG" evidence="1">
    <location>
        <begin position="2"/>
        <end position="77"/>
    </location>
</feature>
<comment type="similarity">
    <text evidence="1">Belongs to the UPF0213 family.</text>
</comment>
<gene>
    <name evidence="1" type="primary">yhbQ</name>
    <name type="ordered locus">SbBS512_E3616</name>
</gene>
<keyword id="KW-1185">Reference proteome</keyword>
<proteinExistence type="inferred from homology"/>
<sequence length="100" mass="11242">MTPWFLYLIRTADNKLYTGITTDVERRYQQHQSGKGAKALRGKGELTLAFSAPVGDRSLALRAEYRVKQLTKRQKERLVAEGAGFAELLSSLQTPEIKSD</sequence>
<protein>
    <recommendedName>
        <fullName evidence="1">UPF0213 protein YhbQ</fullName>
    </recommendedName>
</protein>
<accession>B2U2L2</accession>
<reference key="1">
    <citation type="submission" date="2008-05" db="EMBL/GenBank/DDBJ databases">
        <title>Complete sequence of Shigella boydii serotype 18 strain BS512.</title>
        <authorList>
            <person name="Rasko D.A."/>
            <person name="Rosovitz M."/>
            <person name="Maurelli A.T."/>
            <person name="Myers G."/>
            <person name="Seshadri R."/>
            <person name="Cer R."/>
            <person name="Jiang L."/>
            <person name="Ravel J."/>
            <person name="Sebastian Y."/>
        </authorList>
    </citation>
    <scope>NUCLEOTIDE SEQUENCE [LARGE SCALE GENOMIC DNA]</scope>
    <source>
        <strain>CDC 3083-94 / BS512</strain>
    </source>
</reference>